<name>MKAR_CANGA</name>
<protein>
    <recommendedName>
        <fullName evidence="4">Very-long-chain 3-oxoacyl-CoA reductase</fullName>
        <ecNumber evidence="4">1.1.1.330</ecNumber>
    </recommendedName>
    <alternativeName>
        <fullName evidence="4">3-ketoacyl-CoA reductase</fullName>
        <shortName evidence="4">3-ketoreductase</shortName>
        <shortName evidence="4">KAR</shortName>
    </alternativeName>
    <alternativeName>
        <fullName evidence="4">Microsomal beta-keto-reductase</fullName>
    </alternativeName>
</protein>
<comment type="function">
    <text evidence="4">Component of the microsomal membrane bound fatty acid elongation system, which produces the 26-carbon very long-chain fatty acids (VLCFA) from palmitate. Catalyzes the reduction of the 3-ketoacyl-CoA intermediate that is formed in each cycle of fatty acid elongation. VLCFAs serve as precursors for ceramide and sphingolipids.</text>
</comment>
<comment type="catalytic activity">
    <reaction evidence="4">
        <text>a very-long-chain (3R)-3-hydroxyacyl-CoA + NADP(+) = a very-long-chain 3-oxoacyl-CoA + NADPH + H(+)</text>
        <dbReference type="Rhea" id="RHEA:48680"/>
        <dbReference type="ChEBI" id="CHEBI:15378"/>
        <dbReference type="ChEBI" id="CHEBI:57783"/>
        <dbReference type="ChEBI" id="CHEBI:58349"/>
        <dbReference type="ChEBI" id="CHEBI:85440"/>
        <dbReference type="ChEBI" id="CHEBI:90725"/>
        <dbReference type="EC" id="1.1.1.330"/>
    </reaction>
</comment>
<comment type="pathway">
    <text evidence="3">Lipid metabolism; fatty acid biosynthesis.</text>
</comment>
<comment type="subcellular location">
    <subcellularLocation>
        <location evidence="4">Endoplasmic reticulum membrane</location>
        <topology evidence="4">Single-pass membrane protein</topology>
    </subcellularLocation>
</comment>
<comment type="similarity">
    <text evidence="4">Belongs to the short-chain dehydrogenases/reductases (SDR) family.</text>
</comment>
<dbReference type="EC" id="1.1.1.330" evidence="4"/>
<dbReference type="EMBL" id="CR380954">
    <property type="protein sequence ID" value="CAG60057.1"/>
    <property type="molecule type" value="Genomic_DNA"/>
</dbReference>
<dbReference type="SMR" id="Q6FRM0"/>
<dbReference type="FunCoup" id="Q6FRM0">
    <property type="interactions" value="731"/>
</dbReference>
<dbReference type="STRING" id="284593.Q6FRM0"/>
<dbReference type="EnsemblFungi" id="CAGL0H07513g-T">
    <property type="protein sequence ID" value="CAGL0H07513g-T-p1"/>
    <property type="gene ID" value="CAGL0H07513g"/>
</dbReference>
<dbReference type="KEGG" id="cgr:2888772"/>
<dbReference type="CGD" id="CAL0131832">
    <property type="gene designation" value="IFA38"/>
</dbReference>
<dbReference type="VEuPathDB" id="FungiDB:B1J91_H07513g"/>
<dbReference type="VEuPathDB" id="FungiDB:CAGL0H07513g"/>
<dbReference type="eggNOG" id="KOG1014">
    <property type="taxonomic scope" value="Eukaryota"/>
</dbReference>
<dbReference type="HOGENOM" id="CLU_010194_38_0_1"/>
<dbReference type="InParanoid" id="Q6FRM0"/>
<dbReference type="OMA" id="LVAPGMM"/>
<dbReference type="UniPathway" id="UPA00094"/>
<dbReference type="Proteomes" id="UP000002428">
    <property type="component" value="Chromosome H"/>
</dbReference>
<dbReference type="GO" id="GO:0005789">
    <property type="term" value="C:endoplasmic reticulum membrane"/>
    <property type="evidence" value="ECO:0007669"/>
    <property type="project" value="UniProtKB-SubCell"/>
</dbReference>
<dbReference type="GO" id="GO:0045703">
    <property type="term" value="F:ketoreductase activity"/>
    <property type="evidence" value="ECO:0007669"/>
    <property type="project" value="UniProtKB-UniRule"/>
</dbReference>
<dbReference type="GO" id="GO:0141040">
    <property type="term" value="F:very-long-chain 3-oxoacyl-CoA reductase activity"/>
    <property type="evidence" value="ECO:0007669"/>
    <property type="project" value="UniProtKB-EC"/>
</dbReference>
<dbReference type="GO" id="GO:0030497">
    <property type="term" value="P:fatty acid elongation"/>
    <property type="evidence" value="ECO:0007669"/>
    <property type="project" value="UniProtKB-UniRule"/>
</dbReference>
<dbReference type="GO" id="GO:0030148">
    <property type="term" value="P:sphingolipid biosynthetic process"/>
    <property type="evidence" value="ECO:0000315"/>
    <property type="project" value="CGD"/>
</dbReference>
<dbReference type="GO" id="GO:0042761">
    <property type="term" value="P:very long-chain fatty acid biosynthetic process"/>
    <property type="evidence" value="ECO:0007669"/>
    <property type="project" value="EnsemblFungi"/>
</dbReference>
<dbReference type="CDD" id="cd05356">
    <property type="entry name" value="17beta-HSD1_like_SDR_c"/>
    <property type="match status" value="1"/>
</dbReference>
<dbReference type="FunFam" id="3.40.50.720:FF:000317">
    <property type="entry name" value="Very-long-chain 3-oxoacyl-CoA reductase"/>
    <property type="match status" value="1"/>
</dbReference>
<dbReference type="Gene3D" id="3.40.50.720">
    <property type="entry name" value="NAD(P)-binding Rossmann-like Domain"/>
    <property type="match status" value="1"/>
</dbReference>
<dbReference type="HAMAP" id="MF_03107">
    <property type="entry name" value="3_ketoreductase"/>
    <property type="match status" value="1"/>
</dbReference>
<dbReference type="InterPro" id="IPR027533">
    <property type="entry name" value="3_ketoreductase_fungal"/>
</dbReference>
<dbReference type="InterPro" id="IPR036291">
    <property type="entry name" value="NAD(P)-bd_dom_sf"/>
</dbReference>
<dbReference type="InterPro" id="IPR020904">
    <property type="entry name" value="Sc_DH/Rdtase_CS"/>
</dbReference>
<dbReference type="InterPro" id="IPR002347">
    <property type="entry name" value="SDR_fam"/>
</dbReference>
<dbReference type="PANTHER" id="PTHR43086:SF2">
    <property type="entry name" value="HYDROXYSTEROID DEHYDROGENASE-LIKE PROTEIN 1"/>
    <property type="match status" value="1"/>
</dbReference>
<dbReference type="PANTHER" id="PTHR43086">
    <property type="entry name" value="VERY-LONG-CHAIN 3-OXOOACYL-COA REDUCTASE"/>
    <property type="match status" value="1"/>
</dbReference>
<dbReference type="Pfam" id="PF00106">
    <property type="entry name" value="adh_short"/>
    <property type="match status" value="1"/>
</dbReference>
<dbReference type="PIRSF" id="PIRSF000126">
    <property type="entry name" value="11-beta-HSD1"/>
    <property type="match status" value="1"/>
</dbReference>
<dbReference type="PRINTS" id="PR00081">
    <property type="entry name" value="GDHRDH"/>
</dbReference>
<dbReference type="SUPFAM" id="SSF51735">
    <property type="entry name" value="NAD(P)-binding Rossmann-fold domains"/>
    <property type="match status" value="1"/>
</dbReference>
<dbReference type="PROSITE" id="PS00061">
    <property type="entry name" value="ADH_SHORT"/>
    <property type="match status" value="1"/>
</dbReference>
<feature type="chain" id="PRO_0000357303" description="Very-long-chain 3-oxoacyl-CoA reductase">
    <location>
        <begin position="1"/>
        <end position="352"/>
    </location>
</feature>
<feature type="transmembrane region" description="Helical" evidence="4">
    <location>
        <begin position="20"/>
        <end position="40"/>
    </location>
</feature>
<feature type="active site" description="Proton donor" evidence="2">
    <location>
        <position position="228"/>
    </location>
</feature>
<feature type="active site" description="Lowers pKa of active site Tyr" evidence="2">
    <location>
        <position position="232"/>
    </location>
</feature>
<feature type="binding site" evidence="1">
    <location>
        <position position="66"/>
    </location>
    <ligand>
        <name>NADP(+)</name>
        <dbReference type="ChEBI" id="CHEBI:58349"/>
    </ligand>
</feature>
<feature type="binding site" evidence="1">
    <location>
        <position position="120"/>
    </location>
    <ligand>
        <name>NADP(+)</name>
        <dbReference type="ChEBI" id="CHEBI:58349"/>
    </ligand>
</feature>
<feature type="binding site" evidence="2">
    <location>
        <position position="147"/>
    </location>
    <ligand>
        <name>NADP(+)</name>
        <dbReference type="ChEBI" id="CHEBI:58349"/>
    </ligand>
</feature>
<feature type="binding site" evidence="2">
    <location>
        <position position="228"/>
    </location>
    <ligand>
        <name>NADP(+)</name>
        <dbReference type="ChEBI" id="CHEBI:58349"/>
    </ligand>
</feature>
<feature type="binding site" evidence="2">
    <location>
        <position position="232"/>
    </location>
    <ligand>
        <name>NADP(+)</name>
        <dbReference type="ChEBI" id="CHEBI:58349"/>
    </ligand>
</feature>
<feature type="binding site" evidence="2">
    <location>
        <position position="261"/>
    </location>
    <ligand>
        <name>NADP(+)</name>
        <dbReference type="ChEBI" id="CHEBI:58349"/>
    </ligand>
</feature>
<feature type="binding site" evidence="1">
    <location>
        <position position="263"/>
    </location>
    <ligand>
        <name>NADP(+)</name>
        <dbReference type="ChEBI" id="CHEBI:58349"/>
    </ligand>
</feature>
<evidence type="ECO:0000250" key="1">
    <source>
        <dbReference type="UniProtKB" id="L0E2Z4"/>
    </source>
</evidence>
<evidence type="ECO:0000250" key="2">
    <source>
        <dbReference type="UniProtKB" id="O93868"/>
    </source>
</evidence>
<evidence type="ECO:0000250" key="3">
    <source>
        <dbReference type="UniProtKB" id="P38286"/>
    </source>
</evidence>
<evidence type="ECO:0000255" key="4">
    <source>
        <dbReference type="HAMAP-Rule" id="MF_03107"/>
    </source>
</evidence>
<accession>Q6FRM0</accession>
<sequence>MTFVRELEVASQNSRAFNVTLWFIFIFGLLKLVPFALRFLSMVFDLFVLPPVNYAKYGCKAGDYAVVTGASDGIGKEFASQLASKGFNLVLISRTESKLVALKDELEGKFNIKAKILAIDISADSKDNYNKIYSLCDDLPISILVNNVGQSHSIPVPFLATEEEEMRNIITINNTATLMITQIIAPIIIRTVKKHRESGDKKLKSQRGLILTMGSFGGLIPTPLLATYSGSKAFLQNWSSSLAGELAADNVDVELVLSYLVTSAMSKVRRTSMMIPNPRTFVKSTLRNIGRRCGAQDRYGTITPFWSHAIYHFVIEELFGVYARVVNEINYKFHKSIRIRAVRKAVREAKQN</sequence>
<keyword id="KW-0256">Endoplasmic reticulum</keyword>
<keyword id="KW-0275">Fatty acid biosynthesis</keyword>
<keyword id="KW-0276">Fatty acid metabolism</keyword>
<keyword id="KW-0444">Lipid biosynthesis</keyword>
<keyword id="KW-0443">Lipid metabolism</keyword>
<keyword id="KW-0472">Membrane</keyword>
<keyword id="KW-0521">NADP</keyword>
<keyword id="KW-0560">Oxidoreductase</keyword>
<keyword id="KW-1185">Reference proteome</keyword>
<keyword id="KW-0812">Transmembrane</keyword>
<keyword id="KW-1133">Transmembrane helix</keyword>
<proteinExistence type="inferred from homology"/>
<organism>
    <name type="scientific">Candida glabrata (strain ATCC 2001 / BCRC 20586 / JCM 3761 / NBRC 0622 / NRRL Y-65 / CBS 138)</name>
    <name type="common">Yeast</name>
    <name type="synonym">Nakaseomyces glabratus</name>
    <dbReference type="NCBI Taxonomy" id="284593"/>
    <lineage>
        <taxon>Eukaryota</taxon>
        <taxon>Fungi</taxon>
        <taxon>Dikarya</taxon>
        <taxon>Ascomycota</taxon>
        <taxon>Saccharomycotina</taxon>
        <taxon>Saccharomycetes</taxon>
        <taxon>Saccharomycetales</taxon>
        <taxon>Saccharomycetaceae</taxon>
        <taxon>Nakaseomyces</taxon>
    </lineage>
</organism>
<reference key="1">
    <citation type="journal article" date="2004" name="Nature">
        <title>Genome evolution in yeasts.</title>
        <authorList>
            <person name="Dujon B."/>
            <person name="Sherman D."/>
            <person name="Fischer G."/>
            <person name="Durrens P."/>
            <person name="Casaregola S."/>
            <person name="Lafontaine I."/>
            <person name="de Montigny J."/>
            <person name="Marck C."/>
            <person name="Neuveglise C."/>
            <person name="Talla E."/>
            <person name="Goffard N."/>
            <person name="Frangeul L."/>
            <person name="Aigle M."/>
            <person name="Anthouard V."/>
            <person name="Babour A."/>
            <person name="Barbe V."/>
            <person name="Barnay S."/>
            <person name="Blanchin S."/>
            <person name="Beckerich J.-M."/>
            <person name="Beyne E."/>
            <person name="Bleykasten C."/>
            <person name="Boisrame A."/>
            <person name="Boyer J."/>
            <person name="Cattolico L."/>
            <person name="Confanioleri F."/>
            <person name="de Daruvar A."/>
            <person name="Despons L."/>
            <person name="Fabre E."/>
            <person name="Fairhead C."/>
            <person name="Ferry-Dumazet H."/>
            <person name="Groppi A."/>
            <person name="Hantraye F."/>
            <person name="Hennequin C."/>
            <person name="Jauniaux N."/>
            <person name="Joyet P."/>
            <person name="Kachouri R."/>
            <person name="Kerrest A."/>
            <person name="Koszul R."/>
            <person name="Lemaire M."/>
            <person name="Lesur I."/>
            <person name="Ma L."/>
            <person name="Muller H."/>
            <person name="Nicaud J.-M."/>
            <person name="Nikolski M."/>
            <person name="Oztas S."/>
            <person name="Ozier-Kalogeropoulos O."/>
            <person name="Pellenz S."/>
            <person name="Potier S."/>
            <person name="Richard G.-F."/>
            <person name="Straub M.-L."/>
            <person name="Suleau A."/>
            <person name="Swennen D."/>
            <person name="Tekaia F."/>
            <person name="Wesolowski-Louvel M."/>
            <person name="Westhof E."/>
            <person name="Wirth B."/>
            <person name="Zeniou-Meyer M."/>
            <person name="Zivanovic Y."/>
            <person name="Bolotin-Fukuhara M."/>
            <person name="Thierry A."/>
            <person name="Bouchier C."/>
            <person name="Caudron B."/>
            <person name="Scarpelli C."/>
            <person name="Gaillardin C."/>
            <person name="Weissenbach J."/>
            <person name="Wincker P."/>
            <person name="Souciet J.-L."/>
        </authorList>
    </citation>
    <scope>NUCLEOTIDE SEQUENCE [LARGE SCALE GENOMIC DNA]</scope>
    <source>
        <strain>ATCC 2001 / BCRC 20586 / JCM 3761 / NBRC 0622 / NRRL Y-65 / CBS 138</strain>
    </source>
</reference>
<gene>
    <name type="ordered locus">CAGL0H07513g</name>
</gene>